<proteinExistence type="inferred from homology"/>
<gene>
    <name evidence="1" type="primary">groEL</name>
    <name evidence="1" type="synonym">groL</name>
    <name type="ordered locus">Tcr_0346</name>
</gene>
<sequence>MAKDVRLGLDAREKMVEGINVLADAVKVTLGPKGRNVVLEKSFGAPTVTKDGVSVAREIELEDKFMNMGAQMVKEVSSQTNDVAGDGTTTATVLAQSIVREGMKSVAAGMNPMDLNRGIHKAVEAVVKEIQKMSVPCTTTESIAQVGTISANSDSAVGKMIAEAMEKVSTEGVITVEEGSSLHDELVVVEGMEFDRGYLSPYFVTNQEKMVAELDNPYILLHDKKISNIRDLLPTLEAVSKAGRPLLIIAEDVDGEALATLVINNMRGIVKATAIKAPGFGERRKAMLQDMAVLTGGTVISEEVGLTLENVTLDMLGETKSAVVGKDSTKLIDGAGAKADIEARCAQIRSQAENTTSEYDSEKLQERLAKLAGGVAVIKLGAATEVEMKEKKDRVDDALHATRAAVQEGIVAGGGVALVRARSKVKVKGDNDEQQLGIEIALRAMEEPMRQIAANCGLEGSVIVNKVMESKDNMGFDAASETYVDMIKAGIIDPAKVTRSALQNAASVAGLVLTTGAAIADLPSKDGASADAAAGGMGGMGGMM</sequence>
<name>CH60_HYDCU</name>
<dbReference type="EC" id="5.6.1.7" evidence="1"/>
<dbReference type="EMBL" id="CP000109">
    <property type="protein sequence ID" value="ABB40942.1"/>
    <property type="molecule type" value="Genomic_DNA"/>
</dbReference>
<dbReference type="SMR" id="Q31IT1"/>
<dbReference type="STRING" id="317025.Tcr_0346"/>
<dbReference type="KEGG" id="tcx:Tcr_0346"/>
<dbReference type="eggNOG" id="COG0459">
    <property type="taxonomic scope" value="Bacteria"/>
</dbReference>
<dbReference type="HOGENOM" id="CLU_016503_3_0_6"/>
<dbReference type="OrthoDB" id="9766614at2"/>
<dbReference type="GO" id="GO:0005737">
    <property type="term" value="C:cytoplasm"/>
    <property type="evidence" value="ECO:0007669"/>
    <property type="project" value="UniProtKB-SubCell"/>
</dbReference>
<dbReference type="GO" id="GO:0005524">
    <property type="term" value="F:ATP binding"/>
    <property type="evidence" value="ECO:0007669"/>
    <property type="project" value="UniProtKB-UniRule"/>
</dbReference>
<dbReference type="GO" id="GO:0140662">
    <property type="term" value="F:ATP-dependent protein folding chaperone"/>
    <property type="evidence" value="ECO:0007669"/>
    <property type="project" value="InterPro"/>
</dbReference>
<dbReference type="GO" id="GO:0016853">
    <property type="term" value="F:isomerase activity"/>
    <property type="evidence" value="ECO:0007669"/>
    <property type="project" value="UniProtKB-KW"/>
</dbReference>
<dbReference type="GO" id="GO:0051082">
    <property type="term" value="F:unfolded protein binding"/>
    <property type="evidence" value="ECO:0007669"/>
    <property type="project" value="UniProtKB-UniRule"/>
</dbReference>
<dbReference type="GO" id="GO:0042026">
    <property type="term" value="P:protein refolding"/>
    <property type="evidence" value="ECO:0007669"/>
    <property type="project" value="UniProtKB-UniRule"/>
</dbReference>
<dbReference type="CDD" id="cd03344">
    <property type="entry name" value="GroEL"/>
    <property type="match status" value="1"/>
</dbReference>
<dbReference type="FunFam" id="1.10.560.10:FF:000001">
    <property type="entry name" value="60 kDa chaperonin"/>
    <property type="match status" value="1"/>
</dbReference>
<dbReference type="FunFam" id="3.50.7.10:FF:000001">
    <property type="entry name" value="60 kDa chaperonin"/>
    <property type="match status" value="1"/>
</dbReference>
<dbReference type="Gene3D" id="3.50.7.10">
    <property type="entry name" value="GroEL"/>
    <property type="match status" value="1"/>
</dbReference>
<dbReference type="Gene3D" id="1.10.560.10">
    <property type="entry name" value="GroEL-like equatorial domain"/>
    <property type="match status" value="1"/>
</dbReference>
<dbReference type="Gene3D" id="3.30.260.10">
    <property type="entry name" value="TCP-1-like chaperonin intermediate domain"/>
    <property type="match status" value="1"/>
</dbReference>
<dbReference type="HAMAP" id="MF_00600">
    <property type="entry name" value="CH60"/>
    <property type="match status" value="1"/>
</dbReference>
<dbReference type="InterPro" id="IPR018370">
    <property type="entry name" value="Chaperonin_Cpn60_CS"/>
</dbReference>
<dbReference type="InterPro" id="IPR001844">
    <property type="entry name" value="Cpn60/GroEL"/>
</dbReference>
<dbReference type="InterPro" id="IPR002423">
    <property type="entry name" value="Cpn60/GroEL/TCP-1"/>
</dbReference>
<dbReference type="InterPro" id="IPR027409">
    <property type="entry name" value="GroEL-like_apical_dom_sf"/>
</dbReference>
<dbReference type="InterPro" id="IPR027413">
    <property type="entry name" value="GROEL-like_equatorial_sf"/>
</dbReference>
<dbReference type="InterPro" id="IPR027410">
    <property type="entry name" value="TCP-1-like_intermed_sf"/>
</dbReference>
<dbReference type="NCBIfam" id="TIGR02348">
    <property type="entry name" value="GroEL"/>
    <property type="match status" value="1"/>
</dbReference>
<dbReference type="NCBIfam" id="NF000592">
    <property type="entry name" value="PRK00013.1"/>
    <property type="match status" value="1"/>
</dbReference>
<dbReference type="NCBIfam" id="NF009487">
    <property type="entry name" value="PRK12849.1"/>
    <property type="match status" value="1"/>
</dbReference>
<dbReference type="NCBIfam" id="NF009488">
    <property type="entry name" value="PRK12850.1"/>
    <property type="match status" value="1"/>
</dbReference>
<dbReference type="NCBIfam" id="NF009489">
    <property type="entry name" value="PRK12851.1"/>
    <property type="match status" value="1"/>
</dbReference>
<dbReference type="PANTHER" id="PTHR45633">
    <property type="entry name" value="60 KDA HEAT SHOCK PROTEIN, MITOCHONDRIAL"/>
    <property type="match status" value="1"/>
</dbReference>
<dbReference type="Pfam" id="PF00118">
    <property type="entry name" value="Cpn60_TCP1"/>
    <property type="match status" value="1"/>
</dbReference>
<dbReference type="PRINTS" id="PR00298">
    <property type="entry name" value="CHAPERONIN60"/>
</dbReference>
<dbReference type="SUPFAM" id="SSF52029">
    <property type="entry name" value="GroEL apical domain-like"/>
    <property type="match status" value="1"/>
</dbReference>
<dbReference type="SUPFAM" id="SSF48592">
    <property type="entry name" value="GroEL equatorial domain-like"/>
    <property type="match status" value="1"/>
</dbReference>
<dbReference type="SUPFAM" id="SSF54849">
    <property type="entry name" value="GroEL-intermediate domain like"/>
    <property type="match status" value="1"/>
</dbReference>
<dbReference type="PROSITE" id="PS00296">
    <property type="entry name" value="CHAPERONINS_CPN60"/>
    <property type="match status" value="1"/>
</dbReference>
<protein>
    <recommendedName>
        <fullName evidence="1">Chaperonin GroEL</fullName>
        <ecNumber evidence="1">5.6.1.7</ecNumber>
    </recommendedName>
    <alternativeName>
        <fullName evidence="1">60 kDa chaperonin</fullName>
    </alternativeName>
    <alternativeName>
        <fullName evidence="1">Chaperonin-60</fullName>
        <shortName evidence="1">Cpn60</shortName>
    </alternativeName>
</protein>
<accession>Q31IT1</accession>
<reference key="1">
    <citation type="journal article" date="2006" name="PLoS Biol.">
        <title>The genome of deep-sea vent chemolithoautotroph Thiomicrospira crunogena XCL-2.</title>
        <authorList>
            <person name="Scott K.M."/>
            <person name="Sievert S.M."/>
            <person name="Abril F.N."/>
            <person name="Ball L.A."/>
            <person name="Barrett C.J."/>
            <person name="Blake R.A."/>
            <person name="Boller A.J."/>
            <person name="Chain P.S.G."/>
            <person name="Clark J.A."/>
            <person name="Davis C.R."/>
            <person name="Detter C."/>
            <person name="Do K.F."/>
            <person name="Dobrinski K.P."/>
            <person name="Faza B.I."/>
            <person name="Fitzpatrick K.A."/>
            <person name="Freyermuth S.K."/>
            <person name="Harmer T.L."/>
            <person name="Hauser L.J."/>
            <person name="Huegler M."/>
            <person name="Kerfeld C.A."/>
            <person name="Klotz M.G."/>
            <person name="Kong W.W."/>
            <person name="Land M."/>
            <person name="Lapidus A."/>
            <person name="Larimer F.W."/>
            <person name="Longo D.L."/>
            <person name="Lucas S."/>
            <person name="Malfatti S.A."/>
            <person name="Massey S.E."/>
            <person name="Martin D.D."/>
            <person name="McCuddin Z."/>
            <person name="Meyer F."/>
            <person name="Moore J.L."/>
            <person name="Ocampo L.H. Jr."/>
            <person name="Paul J.H."/>
            <person name="Paulsen I.T."/>
            <person name="Reep D.K."/>
            <person name="Ren Q."/>
            <person name="Ross R.L."/>
            <person name="Sato P.Y."/>
            <person name="Thomas P."/>
            <person name="Tinkham L.E."/>
            <person name="Zeruth G.T."/>
        </authorList>
    </citation>
    <scope>NUCLEOTIDE SEQUENCE [LARGE SCALE GENOMIC DNA]</scope>
    <source>
        <strain>DSM 25203 / XCL-2</strain>
    </source>
</reference>
<feature type="chain" id="PRO_0000257016" description="Chaperonin GroEL">
    <location>
        <begin position="1"/>
        <end position="544"/>
    </location>
</feature>
<feature type="binding site" evidence="1">
    <location>
        <begin position="29"/>
        <end position="32"/>
    </location>
    <ligand>
        <name>ATP</name>
        <dbReference type="ChEBI" id="CHEBI:30616"/>
    </ligand>
</feature>
<feature type="binding site" evidence="1">
    <location>
        <position position="50"/>
    </location>
    <ligand>
        <name>ATP</name>
        <dbReference type="ChEBI" id="CHEBI:30616"/>
    </ligand>
</feature>
<feature type="binding site" evidence="1">
    <location>
        <begin position="86"/>
        <end position="90"/>
    </location>
    <ligand>
        <name>ATP</name>
        <dbReference type="ChEBI" id="CHEBI:30616"/>
    </ligand>
</feature>
<feature type="binding site" evidence="1">
    <location>
        <position position="414"/>
    </location>
    <ligand>
        <name>ATP</name>
        <dbReference type="ChEBI" id="CHEBI:30616"/>
    </ligand>
</feature>
<feature type="binding site" evidence="1">
    <location>
        <begin position="477"/>
        <end position="479"/>
    </location>
    <ligand>
        <name>ATP</name>
        <dbReference type="ChEBI" id="CHEBI:30616"/>
    </ligand>
</feature>
<feature type="binding site" evidence="1">
    <location>
        <position position="493"/>
    </location>
    <ligand>
        <name>ATP</name>
        <dbReference type="ChEBI" id="CHEBI:30616"/>
    </ligand>
</feature>
<comment type="function">
    <text evidence="1">Together with its co-chaperonin GroES, plays an essential role in assisting protein folding. The GroEL-GroES system forms a nano-cage that allows encapsulation of the non-native substrate proteins and provides a physical environment optimized to promote and accelerate protein folding.</text>
</comment>
<comment type="catalytic activity">
    <reaction evidence="1">
        <text>ATP + H2O + a folded polypeptide = ADP + phosphate + an unfolded polypeptide.</text>
        <dbReference type="EC" id="5.6.1.7"/>
    </reaction>
</comment>
<comment type="subunit">
    <text evidence="1">Forms a cylinder of 14 subunits composed of two heptameric rings stacked back-to-back. Interacts with the co-chaperonin GroES.</text>
</comment>
<comment type="subcellular location">
    <subcellularLocation>
        <location evidence="1">Cytoplasm</location>
    </subcellularLocation>
</comment>
<comment type="similarity">
    <text evidence="1">Belongs to the chaperonin (HSP60) family.</text>
</comment>
<keyword id="KW-0067">ATP-binding</keyword>
<keyword id="KW-0143">Chaperone</keyword>
<keyword id="KW-0963">Cytoplasm</keyword>
<keyword id="KW-0413">Isomerase</keyword>
<keyword id="KW-0547">Nucleotide-binding</keyword>
<organism>
    <name type="scientific">Hydrogenovibrio crunogenus (strain DSM 25203 / XCL-2)</name>
    <name type="common">Thiomicrospira crunogena</name>
    <dbReference type="NCBI Taxonomy" id="317025"/>
    <lineage>
        <taxon>Bacteria</taxon>
        <taxon>Pseudomonadati</taxon>
        <taxon>Pseudomonadota</taxon>
        <taxon>Gammaproteobacteria</taxon>
        <taxon>Thiotrichales</taxon>
        <taxon>Piscirickettsiaceae</taxon>
        <taxon>Hydrogenovibrio</taxon>
    </lineage>
</organism>
<evidence type="ECO:0000255" key="1">
    <source>
        <dbReference type="HAMAP-Rule" id="MF_00600"/>
    </source>
</evidence>